<gene>
    <name type="primary">DUO1</name>
    <name type="ordered locus">CAGL0F06963g</name>
</gene>
<dbReference type="EMBL" id="CR380952">
    <property type="protein sequence ID" value="CAG59195.1"/>
    <property type="molecule type" value="Genomic_DNA"/>
</dbReference>
<dbReference type="RefSeq" id="XP_446271.1">
    <property type="nucleotide sequence ID" value="XM_446271.1"/>
</dbReference>
<dbReference type="SMR" id="Q6FU23"/>
<dbReference type="FunCoup" id="Q6FU23">
    <property type="interactions" value="81"/>
</dbReference>
<dbReference type="STRING" id="284593.Q6FU23"/>
<dbReference type="EnsemblFungi" id="CAGL0F06963g-T">
    <property type="protein sequence ID" value="CAGL0F06963g-T-p1"/>
    <property type="gene ID" value="CAGL0F06963g"/>
</dbReference>
<dbReference type="KEGG" id="cgr:2887579"/>
<dbReference type="CGD" id="CAL0131332">
    <property type="gene designation" value="CAGL0F06963g"/>
</dbReference>
<dbReference type="VEuPathDB" id="FungiDB:B1J91_F06963g"/>
<dbReference type="VEuPathDB" id="FungiDB:CAGL0F06963g"/>
<dbReference type="eggNOG" id="ENOG502S4KM">
    <property type="taxonomic scope" value="Eukaryota"/>
</dbReference>
<dbReference type="HOGENOM" id="CLU_114619_0_0_1"/>
<dbReference type="InParanoid" id="Q6FU23"/>
<dbReference type="OMA" id="DTWIKIQ"/>
<dbReference type="Proteomes" id="UP000002428">
    <property type="component" value="Chromosome F"/>
</dbReference>
<dbReference type="GO" id="GO:0005737">
    <property type="term" value="C:cytoplasm"/>
    <property type="evidence" value="ECO:0007669"/>
    <property type="project" value="UniProtKB-KW"/>
</dbReference>
<dbReference type="GO" id="GO:0042729">
    <property type="term" value="C:DASH complex"/>
    <property type="evidence" value="ECO:0000250"/>
    <property type="project" value="UniProtKB"/>
</dbReference>
<dbReference type="GO" id="GO:0005874">
    <property type="term" value="C:microtubule"/>
    <property type="evidence" value="ECO:0007669"/>
    <property type="project" value="UniProtKB-KW"/>
</dbReference>
<dbReference type="GO" id="GO:0072686">
    <property type="term" value="C:mitotic spindle"/>
    <property type="evidence" value="ECO:0007669"/>
    <property type="project" value="InterPro"/>
</dbReference>
<dbReference type="GO" id="GO:0000922">
    <property type="term" value="C:spindle pole"/>
    <property type="evidence" value="ECO:0007669"/>
    <property type="project" value="UniProtKB-SubCell"/>
</dbReference>
<dbReference type="GO" id="GO:0051010">
    <property type="term" value="F:microtubule plus-end binding"/>
    <property type="evidence" value="ECO:0007669"/>
    <property type="project" value="EnsemblFungi"/>
</dbReference>
<dbReference type="GO" id="GO:0008608">
    <property type="term" value="P:attachment of spindle microtubules to kinetochore"/>
    <property type="evidence" value="ECO:0000250"/>
    <property type="project" value="UniProtKB"/>
</dbReference>
<dbReference type="GO" id="GO:0051301">
    <property type="term" value="P:cell division"/>
    <property type="evidence" value="ECO:0007669"/>
    <property type="project" value="UniProtKB-KW"/>
</dbReference>
<dbReference type="GO" id="GO:1990758">
    <property type="term" value="P:mitotic sister chromatid biorientation"/>
    <property type="evidence" value="ECO:0000250"/>
    <property type="project" value="UniProtKB"/>
</dbReference>
<dbReference type="GO" id="GO:0051987">
    <property type="term" value="P:positive regulation of attachment of spindle microtubules to kinetochore"/>
    <property type="evidence" value="ECO:0007669"/>
    <property type="project" value="EnsemblFungi"/>
</dbReference>
<dbReference type="GO" id="GO:0031116">
    <property type="term" value="P:positive regulation of microtubule polymerization"/>
    <property type="evidence" value="ECO:0007669"/>
    <property type="project" value="EnsemblFungi"/>
</dbReference>
<dbReference type="GO" id="GO:1990976">
    <property type="term" value="P:protein transport along microtubule to mitotic spindle pole body"/>
    <property type="evidence" value="ECO:0000250"/>
    <property type="project" value="UniProtKB"/>
</dbReference>
<dbReference type="InterPro" id="IPR013960">
    <property type="entry name" value="DASH_Duo1"/>
</dbReference>
<dbReference type="PANTHER" id="PTHR28216">
    <property type="entry name" value="DASH COMPLEX SUBUNIT DUO1"/>
    <property type="match status" value="1"/>
</dbReference>
<dbReference type="PANTHER" id="PTHR28216:SF1">
    <property type="entry name" value="DASH COMPLEX SUBUNIT DUO1"/>
    <property type="match status" value="1"/>
</dbReference>
<dbReference type="Pfam" id="PF08651">
    <property type="entry name" value="DASH_Duo1"/>
    <property type="match status" value="1"/>
</dbReference>
<comment type="function">
    <text evidence="2">Component of the DASH complex that connects microtubules with kinetochores and couples microtubule depolymerisation to chromosome movement; it is involved in retrieving kinetochores to the spindle poles before their re-orientation on the spindle in early mitosis and allows microtubule depolymerization to pull chromosomes apart and resist detachment during anaphase. Kinetochores, consisting of a centromere-associated inner segment and a microtubule-contacting outer segment, play a crucial role in chromosome segregation by mediating the physical connection between centromeric DNA and microtubules. Kinetochores also serve as an input point for the spindle assembly checkpoint, which delays anaphase until all chromosomes have bioriented on the mitotic spindle.</text>
</comment>
<comment type="subunit">
    <text evidence="1 2">Component of the DASH complex consisting of ASK1, DAD1, DAD2, DAD3, DAD4, DAM1, DUO1, HSK3, SPC19 and SPC34, with a stoichiometry of one copy of each subunit per complex. Multiple DASH complexes oligomerize to form a ring that encircles spindle microtubules and organizes the rod-like NDC80 complexes of the outer kinetochore. DASH complex oligomerization strengthens microtubule attachments (By similarity). On cytoplasmic microtubules, DASH complexes appear to form patches instead of rings (By similarity). Within the complex, DAM1 and DUO1 may form the microtubule connections (By similarity).</text>
</comment>
<comment type="subcellular location">
    <subcellularLocation>
        <location evidence="2">Nucleus</location>
    </subcellularLocation>
    <subcellularLocation>
        <location evidence="2">Cytoplasm</location>
        <location evidence="2">Cytoskeleton</location>
        <location evidence="2">Spindle pole</location>
    </subcellularLocation>
    <subcellularLocation>
        <location evidence="2">Chromosome</location>
        <location evidence="2">Centromere</location>
        <location evidence="2">Kinetochore</location>
    </subcellularLocation>
</comment>
<comment type="similarity">
    <text evidence="5">Belongs to the DASH complex DUO1 family.</text>
</comment>
<name>DUO1_CANGA</name>
<keyword id="KW-0131">Cell cycle</keyword>
<keyword id="KW-0132">Cell division</keyword>
<keyword id="KW-0137">Centromere</keyword>
<keyword id="KW-0158">Chromosome</keyword>
<keyword id="KW-0159">Chromosome partition</keyword>
<keyword id="KW-0175">Coiled coil</keyword>
<keyword id="KW-0963">Cytoplasm</keyword>
<keyword id="KW-0206">Cytoskeleton</keyword>
<keyword id="KW-0995">Kinetochore</keyword>
<keyword id="KW-0493">Microtubule</keyword>
<keyword id="KW-0498">Mitosis</keyword>
<keyword id="KW-0539">Nucleus</keyword>
<keyword id="KW-1185">Reference proteome</keyword>
<organism>
    <name type="scientific">Candida glabrata (strain ATCC 2001 / BCRC 20586 / JCM 3761 / NBRC 0622 / NRRL Y-65 / CBS 138)</name>
    <name type="common">Yeast</name>
    <name type="synonym">Nakaseomyces glabratus</name>
    <dbReference type="NCBI Taxonomy" id="284593"/>
    <lineage>
        <taxon>Eukaryota</taxon>
        <taxon>Fungi</taxon>
        <taxon>Dikarya</taxon>
        <taxon>Ascomycota</taxon>
        <taxon>Saccharomycotina</taxon>
        <taxon>Saccharomycetes</taxon>
        <taxon>Saccharomycetales</taxon>
        <taxon>Saccharomycetaceae</taxon>
        <taxon>Nakaseomyces</taxon>
    </lineage>
</organism>
<reference key="1">
    <citation type="journal article" date="2004" name="Nature">
        <title>Genome evolution in yeasts.</title>
        <authorList>
            <person name="Dujon B."/>
            <person name="Sherman D."/>
            <person name="Fischer G."/>
            <person name="Durrens P."/>
            <person name="Casaregola S."/>
            <person name="Lafontaine I."/>
            <person name="de Montigny J."/>
            <person name="Marck C."/>
            <person name="Neuveglise C."/>
            <person name="Talla E."/>
            <person name="Goffard N."/>
            <person name="Frangeul L."/>
            <person name="Aigle M."/>
            <person name="Anthouard V."/>
            <person name="Babour A."/>
            <person name="Barbe V."/>
            <person name="Barnay S."/>
            <person name="Blanchin S."/>
            <person name="Beckerich J.-M."/>
            <person name="Beyne E."/>
            <person name="Bleykasten C."/>
            <person name="Boisrame A."/>
            <person name="Boyer J."/>
            <person name="Cattolico L."/>
            <person name="Confanioleri F."/>
            <person name="de Daruvar A."/>
            <person name="Despons L."/>
            <person name="Fabre E."/>
            <person name="Fairhead C."/>
            <person name="Ferry-Dumazet H."/>
            <person name="Groppi A."/>
            <person name="Hantraye F."/>
            <person name="Hennequin C."/>
            <person name="Jauniaux N."/>
            <person name="Joyet P."/>
            <person name="Kachouri R."/>
            <person name="Kerrest A."/>
            <person name="Koszul R."/>
            <person name="Lemaire M."/>
            <person name="Lesur I."/>
            <person name="Ma L."/>
            <person name="Muller H."/>
            <person name="Nicaud J.-M."/>
            <person name="Nikolski M."/>
            <person name="Oztas S."/>
            <person name="Ozier-Kalogeropoulos O."/>
            <person name="Pellenz S."/>
            <person name="Potier S."/>
            <person name="Richard G.-F."/>
            <person name="Straub M.-L."/>
            <person name="Suleau A."/>
            <person name="Swennen D."/>
            <person name="Tekaia F."/>
            <person name="Wesolowski-Louvel M."/>
            <person name="Westhof E."/>
            <person name="Wirth B."/>
            <person name="Zeniou-Meyer M."/>
            <person name="Zivanovic Y."/>
            <person name="Bolotin-Fukuhara M."/>
            <person name="Thierry A."/>
            <person name="Bouchier C."/>
            <person name="Caudron B."/>
            <person name="Scarpelli C."/>
            <person name="Gaillardin C."/>
            <person name="Weissenbach J."/>
            <person name="Wincker P."/>
            <person name="Souciet J.-L."/>
        </authorList>
    </citation>
    <scope>NUCLEOTIDE SEQUENCE [LARGE SCALE GENOMIC DNA]</scope>
    <source>
        <strain>ATCC 2001 / BCRC 20586 / JCM 3761 / NBRC 0622 / NRRL Y-65 / CBS 138</strain>
    </source>
</reference>
<proteinExistence type="inferred from homology"/>
<evidence type="ECO:0000250" key="1">
    <source>
        <dbReference type="UniProtKB" id="O74372"/>
    </source>
</evidence>
<evidence type="ECO:0000250" key="2">
    <source>
        <dbReference type="UniProtKB" id="P53168"/>
    </source>
</evidence>
<evidence type="ECO:0000255" key="3"/>
<evidence type="ECO:0000256" key="4">
    <source>
        <dbReference type="SAM" id="MobiDB-lite"/>
    </source>
</evidence>
<evidence type="ECO:0000305" key="5"/>
<feature type="chain" id="PRO_0000215592" description="DASH complex subunit DUO1">
    <location>
        <begin position="1"/>
        <end position="212"/>
    </location>
</feature>
<feature type="region of interest" description="Disordered" evidence="4">
    <location>
        <begin position="150"/>
        <end position="212"/>
    </location>
</feature>
<feature type="coiled-coil region" evidence="3">
    <location>
        <begin position="118"/>
        <end position="148"/>
    </location>
</feature>
<feature type="compositionally biased region" description="Polar residues" evidence="4">
    <location>
        <begin position="193"/>
        <end position="212"/>
    </location>
</feature>
<protein>
    <recommendedName>
        <fullName>DASH complex subunit DUO1</fullName>
    </recommendedName>
    <alternativeName>
        <fullName>Outer kinetochore protein DUO1</fullName>
    </alternativeName>
</protein>
<accession>Q6FU23</accession>
<sequence length="212" mass="23577">MSESLDNSAINQLIPEIFDQMRHNAARTRDAKKPSAMVEESGSITTQSLLRELETLDKVIATIRSIDSVVKGALPSHMNKIHHVCKSTNKMLDNWINIQSQAGYAHHIMDSRTGSKTGSNSNEEVVEQYKQEIAELQKSIKMEEDKLIPAQVKGNGNGPTGQRLYGNSYRQPTGRVTKATALRNARNRPSGIPQISSRLTRPTASSNLKRQR</sequence>